<proteinExistence type="inferred from homology"/>
<comment type="function">
    <text evidence="1">Binds to 23S rRNA. Forms part of two intersubunit bridges in the 70S ribosome.</text>
</comment>
<comment type="subunit">
    <text evidence="1">Part of the 50S ribosomal subunit. Forms a cluster with proteins L3 and L19. In the 70S ribosome, L14 and L19 interact and together make contacts with the 16S rRNA in bridges B5 and B8.</text>
</comment>
<comment type="similarity">
    <text evidence="1">Belongs to the universal ribosomal protein uL14 family.</text>
</comment>
<name>RL14_NEIMF</name>
<sequence>MIQMQTILDVADNSGARRVMCIKVLGGSKRRYASVGDIIKVAVKDAAPRGRVKKGDVYNAVVVRTAKGVRRPDGALIKFDNNAAVLLNNKLEPLGTRIFGPVTRELRTERFMKIVSLAPEVL</sequence>
<organism>
    <name type="scientific">Neisseria meningitidis serogroup C / serotype 2a (strain ATCC 700532 / DSM 15464 / FAM18)</name>
    <dbReference type="NCBI Taxonomy" id="272831"/>
    <lineage>
        <taxon>Bacteria</taxon>
        <taxon>Pseudomonadati</taxon>
        <taxon>Pseudomonadota</taxon>
        <taxon>Betaproteobacteria</taxon>
        <taxon>Neisseriales</taxon>
        <taxon>Neisseriaceae</taxon>
        <taxon>Neisseria</taxon>
    </lineage>
</organism>
<reference key="1">
    <citation type="journal article" date="2007" name="PLoS Genet.">
        <title>Meningococcal genetic variation mechanisms viewed through comparative analysis of serogroup C strain FAM18.</title>
        <authorList>
            <person name="Bentley S.D."/>
            <person name="Vernikos G.S."/>
            <person name="Snyder L.A.S."/>
            <person name="Churcher C."/>
            <person name="Arrowsmith C."/>
            <person name="Chillingworth T."/>
            <person name="Cronin A."/>
            <person name="Davis P.H."/>
            <person name="Holroyd N.E."/>
            <person name="Jagels K."/>
            <person name="Maddison M."/>
            <person name="Moule S."/>
            <person name="Rabbinowitsch E."/>
            <person name="Sharp S."/>
            <person name="Unwin L."/>
            <person name="Whitehead S."/>
            <person name="Quail M.A."/>
            <person name="Achtman M."/>
            <person name="Barrell B.G."/>
            <person name="Saunders N.J."/>
            <person name="Parkhill J."/>
        </authorList>
    </citation>
    <scope>NUCLEOTIDE SEQUENCE [LARGE SCALE GENOMIC DNA]</scope>
    <source>
        <strain>ATCC 700532 / DSM 15464 / FAM18</strain>
    </source>
</reference>
<dbReference type="EMBL" id="AM421808">
    <property type="protein sequence ID" value="CAM09461.1"/>
    <property type="molecule type" value="Genomic_DNA"/>
</dbReference>
<dbReference type="RefSeq" id="WP_002215434.1">
    <property type="nucleotide sequence ID" value="NC_008767.1"/>
</dbReference>
<dbReference type="SMR" id="A1KRI3"/>
<dbReference type="GeneID" id="94582047"/>
<dbReference type="KEGG" id="nmc:NMC0142"/>
<dbReference type="HOGENOM" id="CLU_095071_2_1_4"/>
<dbReference type="Proteomes" id="UP000002286">
    <property type="component" value="Chromosome"/>
</dbReference>
<dbReference type="GO" id="GO:0022625">
    <property type="term" value="C:cytosolic large ribosomal subunit"/>
    <property type="evidence" value="ECO:0007669"/>
    <property type="project" value="TreeGrafter"/>
</dbReference>
<dbReference type="GO" id="GO:0070180">
    <property type="term" value="F:large ribosomal subunit rRNA binding"/>
    <property type="evidence" value="ECO:0007669"/>
    <property type="project" value="TreeGrafter"/>
</dbReference>
<dbReference type="GO" id="GO:0003735">
    <property type="term" value="F:structural constituent of ribosome"/>
    <property type="evidence" value="ECO:0007669"/>
    <property type="project" value="InterPro"/>
</dbReference>
<dbReference type="GO" id="GO:0006412">
    <property type="term" value="P:translation"/>
    <property type="evidence" value="ECO:0007669"/>
    <property type="project" value="UniProtKB-UniRule"/>
</dbReference>
<dbReference type="CDD" id="cd00337">
    <property type="entry name" value="Ribosomal_uL14"/>
    <property type="match status" value="1"/>
</dbReference>
<dbReference type="FunFam" id="2.40.150.20:FF:000001">
    <property type="entry name" value="50S ribosomal protein L14"/>
    <property type="match status" value="1"/>
</dbReference>
<dbReference type="Gene3D" id="2.40.150.20">
    <property type="entry name" value="Ribosomal protein L14"/>
    <property type="match status" value="1"/>
</dbReference>
<dbReference type="HAMAP" id="MF_01367">
    <property type="entry name" value="Ribosomal_uL14"/>
    <property type="match status" value="1"/>
</dbReference>
<dbReference type="InterPro" id="IPR000218">
    <property type="entry name" value="Ribosomal_uL14"/>
</dbReference>
<dbReference type="InterPro" id="IPR005745">
    <property type="entry name" value="Ribosomal_uL14_bac-type"/>
</dbReference>
<dbReference type="InterPro" id="IPR019972">
    <property type="entry name" value="Ribosomal_uL14_CS"/>
</dbReference>
<dbReference type="InterPro" id="IPR036853">
    <property type="entry name" value="Ribosomal_uL14_sf"/>
</dbReference>
<dbReference type="NCBIfam" id="TIGR01067">
    <property type="entry name" value="rplN_bact"/>
    <property type="match status" value="1"/>
</dbReference>
<dbReference type="PANTHER" id="PTHR11761">
    <property type="entry name" value="50S/60S RIBOSOMAL PROTEIN L14/L23"/>
    <property type="match status" value="1"/>
</dbReference>
<dbReference type="PANTHER" id="PTHR11761:SF3">
    <property type="entry name" value="LARGE RIBOSOMAL SUBUNIT PROTEIN UL14M"/>
    <property type="match status" value="1"/>
</dbReference>
<dbReference type="Pfam" id="PF00238">
    <property type="entry name" value="Ribosomal_L14"/>
    <property type="match status" value="1"/>
</dbReference>
<dbReference type="SMART" id="SM01374">
    <property type="entry name" value="Ribosomal_L14"/>
    <property type="match status" value="1"/>
</dbReference>
<dbReference type="SUPFAM" id="SSF50193">
    <property type="entry name" value="Ribosomal protein L14"/>
    <property type="match status" value="1"/>
</dbReference>
<dbReference type="PROSITE" id="PS00049">
    <property type="entry name" value="RIBOSOMAL_L14"/>
    <property type="match status" value="1"/>
</dbReference>
<protein>
    <recommendedName>
        <fullName evidence="1">Large ribosomal subunit protein uL14</fullName>
    </recommendedName>
    <alternativeName>
        <fullName evidence="2">50S ribosomal protein L14</fullName>
    </alternativeName>
</protein>
<accession>A1KRI3</accession>
<evidence type="ECO:0000255" key="1">
    <source>
        <dbReference type="HAMAP-Rule" id="MF_01367"/>
    </source>
</evidence>
<evidence type="ECO:0000305" key="2"/>
<gene>
    <name evidence="1" type="primary">rplN</name>
    <name type="ordered locus">NMC0142</name>
</gene>
<keyword id="KW-0687">Ribonucleoprotein</keyword>
<keyword id="KW-0689">Ribosomal protein</keyword>
<keyword id="KW-0694">RNA-binding</keyword>
<keyword id="KW-0699">rRNA-binding</keyword>
<feature type="chain" id="PRO_1000055648" description="Large ribosomal subunit protein uL14">
    <location>
        <begin position="1"/>
        <end position="122"/>
    </location>
</feature>